<reference key="1">
    <citation type="journal article" date="2008" name="Chem. Biol. Interact.">
        <title>Extending the Bacillus cereus group genomics to putative food-borne pathogens of different toxicity.</title>
        <authorList>
            <person name="Lapidus A."/>
            <person name="Goltsman E."/>
            <person name="Auger S."/>
            <person name="Galleron N."/>
            <person name="Segurens B."/>
            <person name="Dossat C."/>
            <person name="Land M.L."/>
            <person name="Broussolle V."/>
            <person name="Brillard J."/>
            <person name="Guinebretiere M.-H."/>
            <person name="Sanchis V."/>
            <person name="Nguen-the C."/>
            <person name="Lereclus D."/>
            <person name="Richardson P."/>
            <person name="Wincker P."/>
            <person name="Weissenbach J."/>
            <person name="Ehrlich S.D."/>
            <person name="Sorokin A."/>
        </authorList>
    </citation>
    <scope>NUCLEOTIDE SEQUENCE [LARGE SCALE GENOMIC DNA]</scope>
    <source>
        <strain>DSM 22905 / CIP 110041 / 391-98 / NVH 391-98</strain>
    </source>
</reference>
<proteinExistence type="inferred from homology"/>
<keyword id="KW-0028">Amino-acid biosynthesis</keyword>
<keyword id="KW-0963">Cytoplasm</keyword>
<keyword id="KW-0368">Histidine biosynthesis</keyword>
<keyword id="KW-0378">Hydrolase</keyword>
<keyword id="KW-0460">Magnesium</keyword>
<keyword id="KW-0479">Metal-binding</keyword>
<keyword id="KW-0862">Zinc</keyword>
<gene>
    <name evidence="1" type="primary">hisI</name>
    <name type="ordered locus">Bcer98_1134</name>
</gene>
<protein>
    <recommendedName>
        <fullName evidence="1">Phosphoribosyl-AMP cyclohydrolase</fullName>
        <shortName evidence="1">PRA-CH</shortName>
        <ecNumber evidence="1">3.5.4.19</ecNumber>
    </recommendedName>
</protein>
<evidence type="ECO:0000255" key="1">
    <source>
        <dbReference type="HAMAP-Rule" id="MF_01021"/>
    </source>
</evidence>
<comment type="function">
    <text evidence="1">Catalyzes the hydrolysis of the adenine ring of phosphoribosyl-AMP.</text>
</comment>
<comment type="catalytic activity">
    <reaction evidence="1">
        <text>1-(5-phospho-beta-D-ribosyl)-5'-AMP + H2O = 1-(5-phospho-beta-D-ribosyl)-5-[(5-phospho-beta-D-ribosylamino)methylideneamino]imidazole-4-carboxamide</text>
        <dbReference type="Rhea" id="RHEA:20049"/>
        <dbReference type="ChEBI" id="CHEBI:15377"/>
        <dbReference type="ChEBI" id="CHEBI:58435"/>
        <dbReference type="ChEBI" id="CHEBI:59457"/>
        <dbReference type="EC" id="3.5.4.19"/>
    </reaction>
</comment>
<comment type="cofactor">
    <cofactor evidence="1">
        <name>Mg(2+)</name>
        <dbReference type="ChEBI" id="CHEBI:18420"/>
    </cofactor>
    <text evidence="1">Binds 1 Mg(2+) ion per subunit.</text>
</comment>
<comment type="cofactor">
    <cofactor evidence="1">
        <name>Zn(2+)</name>
        <dbReference type="ChEBI" id="CHEBI:29105"/>
    </cofactor>
    <text evidence="1">Binds 1 zinc ion per subunit.</text>
</comment>
<comment type="pathway">
    <text evidence="1">Amino-acid biosynthesis; L-histidine biosynthesis; L-histidine from 5-phospho-alpha-D-ribose 1-diphosphate: step 3/9.</text>
</comment>
<comment type="subunit">
    <text evidence="1">Homodimer.</text>
</comment>
<comment type="subcellular location">
    <subcellularLocation>
        <location evidence="1">Cytoplasm</location>
    </subcellularLocation>
</comment>
<comment type="similarity">
    <text evidence="1">Belongs to the PRA-CH family.</text>
</comment>
<accession>A7GMV1</accession>
<name>HIS3_BACCN</name>
<dbReference type="EC" id="3.5.4.19" evidence="1"/>
<dbReference type="EMBL" id="CP000764">
    <property type="protein sequence ID" value="ABS21459.1"/>
    <property type="molecule type" value="Genomic_DNA"/>
</dbReference>
<dbReference type="RefSeq" id="WP_011984212.1">
    <property type="nucleotide sequence ID" value="NC_009674.1"/>
</dbReference>
<dbReference type="SMR" id="A7GMV1"/>
<dbReference type="STRING" id="315749.Bcer98_1134"/>
<dbReference type="GeneID" id="33896490"/>
<dbReference type="KEGG" id="bcy:Bcer98_1134"/>
<dbReference type="eggNOG" id="COG0139">
    <property type="taxonomic scope" value="Bacteria"/>
</dbReference>
<dbReference type="HOGENOM" id="CLU_048577_5_3_9"/>
<dbReference type="OrthoDB" id="9795769at2"/>
<dbReference type="UniPathway" id="UPA00031">
    <property type="reaction ID" value="UER00008"/>
</dbReference>
<dbReference type="Proteomes" id="UP000002300">
    <property type="component" value="Chromosome"/>
</dbReference>
<dbReference type="GO" id="GO:0005737">
    <property type="term" value="C:cytoplasm"/>
    <property type="evidence" value="ECO:0007669"/>
    <property type="project" value="UniProtKB-SubCell"/>
</dbReference>
<dbReference type="GO" id="GO:0000287">
    <property type="term" value="F:magnesium ion binding"/>
    <property type="evidence" value="ECO:0007669"/>
    <property type="project" value="UniProtKB-UniRule"/>
</dbReference>
<dbReference type="GO" id="GO:0004635">
    <property type="term" value="F:phosphoribosyl-AMP cyclohydrolase activity"/>
    <property type="evidence" value="ECO:0007669"/>
    <property type="project" value="UniProtKB-UniRule"/>
</dbReference>
<dbReference type="GO" id="GO:0008270">
    <property type="term" value="F:zinc ion binding"/>
    <property type="evidence" value="ECO:0007669"/>
    <property type="project" value="UniProtKB-UniRule"/>
</dbReference>
<dbReference type="GO" id="GO:0000105">
    <property type="term" value="P:L-histidine biosynthetic process"/>
    <property type="evidence" value="ECO:0007669"/>
    <property type="project" value="UniProtKB-UniRule"/>
</dbReference>
<dbReference type="FunFam" id="3.10.20.810:FF:000001">
    <property type="entry name" value="Histidine biosynthesis bifunctional protein HisIE"/>
    <property type="match status" value="1"/>
</dbReference>
<dbReference type="Gene3D" id="3.10.20.810">
    <property type="entry name" value="Phosphoribosyl-AMP cyclohydrolase"/>
    <property type="match status" value="1"/>
</dbReference>
<dbReference type="HAMAP" id="MF_01021">
    <property type="entry name" value="HisI"/>
    <property type="match status" value="1"/>
</dbReference>
<dbReference type="InterPro" id="IPR026660">
    <property type="entry name" value="PRA-CH"/>
</dbReference>
<dbReference type="InterPro" id="IPR002496">
    <property type="entry name" value="PRib_AMP_CycHydrolase_dom"/>
</dbReference>
<dbReference type="InterPro" id="IPR038019">
    <property type="entry name" value="PRib_AMP_CycHydrolase_sf"/>
</dbReference>
<dbReference type="NCBIfam" id="NF000768">
    <property type="entry name" value="PRK00051.1"/>
    <property type="match status" value="1"/>
</dbReference>
<dbReference type="PANTHER" id="PTHR42945">
    <property type="entry name" value="HISTIDINE BIOSYNTHESIS BIFUNCTIONAL PROTEIN"/>
    <property type="match status" value="1"/>
</dbReference>
<dbReference type="PANTHER" id="PTHR42945:SF1">
    <property type="entry name" value="HISTIDINE BIOSYNTHESIS BIFUNCTIONAL PROTEIN HIS7"/>
    <property type="match status" value="1"/>
</dbReference>
<dbReference type="Pfam" id="PF01502">
    <property type="entry name" value="PRA-CH"/>
    <property type="match status" value="1"/>
</dbReference>
<dbReference type="SUPFAM" id="SSF141734">
    <property type="entry name" value="HisI-like"/>
    <property type="match status" value="1"/>
</dbReference>
<organism>
    <name type="scientific">Bacillus cytotoxicus (strain DSM 22905 / CIP 110041 / 391-98 / NVH 391-98)</name>
    <dbReference type="NCBI Taxonomy" id="315749"/>
    <lineage>
        <taxon>Bacteria</taxon>
        <taxon>Bacillati</taxon>
        <taxon>Bacillota</taxon>
        <taxon>Bacilli</taxon>
        <taxon>Bacillales</taxon>
        <taxon>Bacillaceae</taxon>
        <taxon>Bacillus</taxon>
        <taxon>Bacillus cereus group</taxon>
    </lineage>
</organism>
<sequence>MRPNFSKGLLPAIVINEETKEVLMLAYMNEEAYEKTLKTKKTWFYSRSRQTLWNKGATSGHVQHVKSLYLDCDQDAIVITVNQVGVACHTGEKTCFHHKII</sequence>
<feature type="chain" id="PRO_1000084173" description="Phosphoribosyl-AMP cyclohydrolase">
    <location>
        <begin position="1"/>
        <end position="101"/>
    </location>
</feature>
<feature type="binding site" evidence="1">
    <location>
        <position position="71"/>
    </location>
    <ligand>
        <name>Mg(2+)</name>
        <dbReference type="ChEBI" id="CHEBI:18420"/>
    </ligand>
</feature>
<feature type="binding site" evidence="1">
    <location>
        <position position="72"/>
    </location>
    <ligand>
        <name>Zn(2+)</name>
        <dbReference type="ChEBI" id="CHEBI:29105"/>
        <note>ligand shared between dimeric partners</note>
    </ligand>
</feature>
<feature type="binding site" evidence="1">
    <location>
        <position position="73"/>
    </location>
    <ligand>
        <name>Mg(2+)</name>
        <dbReference type="ChEBI" id="CHEBI:18420"/>
    </ligand>
</feature>
<feature type="binding site" evidence="1">
    <location>
        <position position="75"/>
    </location>
    <ligand>
        <name>Mg(2+)</name>
        <dbReference type="ChEBI" id="CHEBI:18420"/>
    </ligand>
</feature>
<feature type="binding site" evidence="1">
    <location>
        <position position="88"/>
    </location>
    <ligand>
        <name>Zn(2+)</name>
        <dbReference type="ChEBI" id="CHEBI:29105"/>
        <note>ligand shared between dimeric partners</note>
    </ligand>
</feature>
<feature type="binding site" evidence="1">
    <location>
        <position position="95"/>
    </location>
    <ligand>
        <name>Zn(2+)</name>
        <dbReference type="ChEBI" id="CHEBI:29105"/>
        <note>ligand shared between dimeric partners</note>
    </ligand>
</feature>